<keyword id="KW-0028">Amino-acid biosynthesis</keyword>
<keyword id="KW-0963">Cytoplasm</keyword>
<keyword id="KW-0368">Histidine biosynthesis</keyword>
<accession>A8Z5I0</accession>
<feature type="chain" id="PRO_1000076252" description="ATP phosphoribosyltransferase regulatory subunit">
    <location>
        <begin position="1"/>
        <end position="272"/>
    </location>
</feature>
<sequence>MNNSEQLIALKESETAFLKYFNKADYELVDFSVVEKLDWKQLNHEDLQQMGERNFWQHEHQIYALRNDFTDQLLRYYSMYPTAATKVAYTGLIIRNNEAAVQVGLENYAPSLANVQQSLKLFIQFIQQQLRDNVHFVVLGHYQLLDALLDKSLQTPDILSMIEERNLSGLVTYLSTEHPIVQILKENTQQQLNVLEHYIPNDHPALVELKIWERWLHKQGYKDIHLDITAQPPRSYYTGLFIQCHFAENESRVLTGGYYKGSIEGFGLGLTL</sequence>
<organism>
    <name type="scientific">Staphylococcus aureus (strain USA300 / TCH1516)</name>
    <dbReference type="NCBI Taxonomy" id="451516"/>
    <lineage>
        <taxon>Bacteria</taxon>
        <taxon>Bacillati</taxon>
        <taxon>Bacillota</taxon>
        <taxon>Bacilli</taxon>
        <taxon>Bacillales</taxon>
        <taxon>Staphylococcaceae</taxon>
        <taxon>Staphylococcus</taxon>
    </lineage>
</organism>
<comment type="function">
    <text evidence="1">Required for the first step of histidine biosynthesis. May allow the feedback regulation of ATP phosphoribosyltransferase activity by histidine.</text>
</comment>
<comment type="pathway">
    <text evidence="1">Amino-acid biosynthesis; L-histidine biosynthesis; L-histidine from 5-phospho-alpha-D-ribose 1-diphosphate: step 1/9.</text>
</comment>
<comment type="subunit">
    <text evidence="1">Heteromultimer composed of HisG and HisZ subunits.</text>
</comment>
<comment type="subcellular location">
    <subcellularLocation>
        <location evidence="1">Cytoplasm</location>
    </subcellularLocation>
</comment>
<comment type="miscellaneous">
    <text>This function is generally fulfilled by the C-terminal part of HisG, which is missing in some bacteria such as this one.</text>
</comment>
<comment type="similarity">
    <text evidence="1">Belongs to the class-II aminoacyl-tRNA synthetase family. HisZ subfamily.</text>
</comment>
<protein>
    <recommendedName>
        <fullName evidence="1">ATP phosphoribosyltransferase regulatory subunit</fullName>
    </recommendedName>
</protein>
<gene>
    <name evidence="1" type="primary">hisZ</name>
    <name type="ordered locus">USA300HOU_2681</name>
</gene>
<name>HISZ_STAAT</name>
<reference key="1">
    <citation type="journal article" date="2007" name="BMC Microbiol.">
        <title>Subtle genetic changes enhance virulence of methicillin resistant and sensitive Staphylococcus aureus.</title>
        <authorList>
            <person name="Highlander S.K."/>
            <person name="Hulten K.G."/>
            <person name="Qin X."/>
            <person name="Jiang H."/>
            <person name="Yerrapragada S."/>
            <person name="Mason E.O. Jr."/>
            <person name="Shang Y."/>
            <person name="Williams T.M."/>
            <person name="Fortunov R.M."/>
            <person name="Liu Y."/>
            <person name="Igboeli O."/>
            <person name="Petrosino J."/>
            <person name="Tirumalai M."/>
            <person name="Uzman A."/>
            <person name="Fox G.E."/>
            <person name="Cardenas A.M."/>
            <person name="Muzny D.M."/>
            <person name="Hemphill L."/>
            <person name="Ding Y."/>
            <person name="Dugan S."/>
            <person name="Blyth P.R."/>
            <person name="Buhay C.J."/>
            <person name="Dinh H.H."/>
            <person name="Hawes A.C."/>
            <person name="Holder M."/>
            <person name="Kovar C.L."/>
            <person name="Lee S.L."/>
            <person name="Liu W."/>
            <person name="Nazareth L.V."/>
            <person name="Wang Q."/>
            <person name="Zhou J."/>
            <person name="Kaplan S.L."/>
            <person name="Weinstock G.M."/>
        </authorList>
    </citation>
    <scope>NUCLEOTIDE SEQUENCE [LARGE SCALE GENOMIC DNA]</scope>
    <source>
        <strain>USA300 / TCH1516</strain>
    </source>
</reference>
<proteinExistence type="inferred from homology"/>
<dbReference type="EMBL" id="CP000730">
    <property type="protein sequence ID" value="ABX30667.1"/>
    <property type="molecule type" value="Genomic_DNA"/>
</dbReference>
<dbReference type="RefSeq" id="WP_001065590.1">
    <property type="nucleotide sequence ID" value="NC_010079.1"/>
</dbReference>
<dbReference type="SMR" id="A8Z5I0"/>
<dbReference type="KEGG" id="sax:USA300HOU_2681"/>
<dbReference type="HOGENOM" id="CLU_089652_0_0_9"/>
<dbReference type="UniPathway" id="UPA00031">
    <property type="reaction ID" value="UER00006"/>
</dbReference>
<dbReference type="GO" id="GO:0005737">
    <property type="term" value="C:cytoplasm"/>
    <property type="evidence" value="ECO:0007669"/>
    <property type="project" value="UniProtKB-SubCell"/>
</dbReference>
<dbReference type="GO" id="GO:0140096">
    <property type="term" value="F:catalytic activity, acting on a protein"/>
    <property type="evidence" value="ECO:0007669"/>
    <property type="project" value="UniProtKB-ARBA"/>
</dbReference>
<dbReference type="GO" id="GO:0016740">
    <property type="term" value="F:transferase activity"/>
    <property type="evidence" value="ECO:0007669"/>
    <property type="project" value="UniProtKB-ARBA"/>
</dbReference>
<dbReference type="GO" id="GO:0000105">
    <property type="term" value="P:L-histidine biosynthetic process"/>
    <property type="evidence" value="ECO:0007669"/>
    <property type="project" value="UniProtKB-UniRule"/>
</dbReference>
<dbReference type="Gene3D" id="3.30.930.10">
    <property type="entry name" value="Bira Bifunctional Protein, Domain 2"/>
    <property type="match status" value="1"/>
</dbReference>
<dbReference type="HAMAP" id="MF_00125">
    <property type="entry name" value="HisZ"/>
    <property type="match status" value="1"/>
</dbReference>
<dbReference type="InterPro" id="IPR045864">
    <property type="entry name" value="aa-tRNA-synth_II/BPL/LPL"/>
</dbReference>
<dbReference type="InterPro" id="IPR041715">
    <property type="entry name" value="HisRS-like_core"/>
</dbReference>
<dbReference type="InterPro" id="IPR004517">
    <property type="entry name" value="HisZ"/>
</dbReference>
<dbReference type="NCBIfam" id="NF008947">
    <property type="entry name" value="PRK12294.1"/>
    <property type="match status" value="1"/>
</dbReference>
<dbReference type="Pfam" id="PF13393">
    <property type="entry name" value="tRNA-synt_His"/>
    <property type="match status" value="1"/>
</dbReference>
<dbReference type="SUPFAM" id="SSF55681">
    <property type="entry name" value="Class II aaRS and biotin synthetases"/>
    <property type="match status" value="1"/>
</dbReference>
<evidence type="ECO:0000255" key="1">
    <source>
        <dbReference type="HAMAP-Rule" id="MF_00125"/>
    </source>
</evidence>